<proteinExistence type="evidence at transcript level"/>
<keyword id="KW-0112">Calmodulin-binding</keyword>
<keyword id="KW-0114">cAMP</keyword>
<keyword id="KW-0116">cAMP-binding</keyword>
<keyword id="KW-1003">Cell membrane</keyword>
<keyword id="KW-0140">cGMP</keyword>
<keyword id="KW-0142">cGMP-binding</keyword>
<keyword id="KW-0407">Ion channel</keyword>
<keyword id="KW-0406">Ion transport</keyword>
<keyword id="KW-1071">Ligand-gated ion channel</keyword>
<keyword id="KW-0472">Membrane</keyword>
<keyword id="KW-0547">Nucleotide-binding</keyword>
<keyword id="KW-1185">Reference proteome</keyword>
<keyword id="KW-0812">Transmembrane</keyword>
<keyword id="KW-1133">Transmembrane helix</keyword>
<keyword id="KW-0813">Transport</keyword>
<comment type="function">
    <text>Probable cyclic nucleotide-gated ion channel.</text>
</comment>
<comment type="subunit">
    <text evidence="3">Homotetramer or heterotetramer.</text>
</comment>
<comment type="subcellular location">
    <subcellularLocation>
        <location evidence="3">Cell membrane</location>
        <topology evidence="3">Multi-pass membrane protein</topology>
    </subcellularLocation>
</comment>
<comment type="domain">
    <text evidence="1">The binding of calmodulin to the C-terminus might interfere with cyclic nucleotide binding and thus channel activation.</text>
</comment>
<comment type="similarity">
    <text evidence="3">Belongs to the cyclic nucleotide-gated cation channel (TC 1.A.1.5) family.</text>
</comment>
<name>CNGC3_ARATH</name>
<gene>
    <name type="primary">CNGC3</name>
    <name type="ordered locus">At2g46430</name>
    <name type="ORF">F11C10.12</name>
</gene>
<reference key="1">
    <citation type="journal article" date="1999" name="Plant J.">
        <title>Characterisation of a novel gene family of putative cyclic nucleotide- and calmodulin-regulated ion channels in Arabidopsis thaliana.</title>
        <authorList>
            <person name="Koehler C."/>
            <person name="Merkle T."/>
            <person name="Neuhaus G."/>
        </authorList>
    </citation>
    <scope>NUCLEOTIDE SEQUENCE [GENOMIC DNA]</scope>
    <source>
        <strain>cv. Columbia</strain>
    </source>
</reference>
<reference key="2">
    <citation type="submission" date="1998-11" db="EMBL/GenBank/DDBJ databases">
        <authorList>
            <person name="Chattaway J."/>
            <person name="Fischer M."/>
            <person name="Sanders D."/>
        </authorList>
    </citation>
    <scope>NUCLEOTIDE SEQUENCE [MRNA]</scope>
</reference>
<reference key="3">
    <citation type="journal article" date="1999" name="Nature">
        <title>Sequence and analysis of chromosome 2 of the plant Arabidopsis thaliana.</title>
        <authorList>
            <person name="Lin X."/>
            <person name="Kaul S."/>
            <person name="Rounsley S.D."/>
            <person name="Shea T.P."/>
            <person name="Benito M.-I."/>
            <person name="Town C.D."/>
            <person name="Fujii C.Y."/>
            <person name="Mason T.M."/>
            <person name="Bowman C.L."/>
            <person name="Barnstead M.E."/>
            <person name="Feldblyum T.V."/>
            <person name="Buell C.R."/>
            <person name="Ketchum K.A."/>
            <person name="Lee J.J."/>
            <person name="Ronning C.M."/>
            <person name="Koo H.L."/>
            <person name="Moffat K.S."/>
            <person name="Cronin L.A."/>
            <person name="Shen M."/>
            <person name="Pai G."/>
            <person name="Van Aken S."/>
            <person name="Umayam L."/>
            <person name="Tallon L.J."/>
            <person name="Gill J.E."/>
            <person name="Adams M.D."/>
            <person name="Carrera A.J."/>
            <person name="Creasy T.H."/>
            <person name="Goodman H.M."/>
            <person name="Somerville C.R."/>
            <person name="Copenhaver G.P."/>
            <person name="Preuss D."/>
            <person name="Nierman W.C."/>
            <person name="White O."/>
            <person name="Eisen J.A."/>
            <person name="Salzberg S.L."/>
            <person name="Fraser C.M."/>
            <person name="Venter J.C."/>
        </authorList>
    </citation>
    <scope>NUCLEOTIDE SEQUENCE [LARGE SCALE GENOMIC DNA]</scope>
    <source>
        <strain>cv. Columbia</strain>
    </source>
</reference>
<reference key="4">
    <citation type="journal article" date="2017" name="Plant J.">
        <title>Araport11: a complete reannotation of the Arabidopsis thaliana reference genome.</title>
        <authorList>
            <person name="Cheng C.Y."/>
            <person name="Krishnakumar V."/>
            <person name="Chan A.P."/>
            <person name="Thibaud-Nissen F."/>
            <person name="Schobel S."/>
            <person name="Town C.D."/>
        </authorList>
    </citation>
    <scope>GENOME REANNOTATION</scope>
    <source>
        <strain>cv. Columbia</strain>
    </source>
</reference>
<reference key="5">
    <citation type="journal article" date="2003" name="Science">
        <title>Empirical analysis of transcriptional activity in the Arabidopsis genome.</title>
        <authorList>
            <person name="Yamada K."/>
            <person name="Lim J."/>
            <person name="Dale J.M."/>
            <person name="Chen H."/>
            <person name="Shinn P."/>
            <person name="Palm C.J."/>
            <person name="Southwick A.M."/>
            <person name="Wu H.C."/>
            <person name="Kim C.J."/>
            <person name="Nguyen M."/>
            <person name="Pham P.K."/>
            <person name="Cheuk R.F."/>
            <person name="Karlin-Newmann G."/>
            <person name="Liu S.X."/>
            <person name="Lam B."/>
            <person name="Sakano H."/>
            <person name="Wu T."/>
            <person name="Yu G."/>
            <person name="Miranda M."/>
            <person name="Quach H.L."/>
            <person name="Tripp M."/>
            <person name="Chang C.H."/>
            <person name="Lee J.M."/>
            <person name="Toriumi M.J."/>
            <person name="Chan M.M."/>
            <person name="Tang C.C."/>
            <person name="Onodera C.S."/>
            <person name="Deng J.M."/>
            <person name="Akiyama K."/>
            <person name="Ansari Y."/>
            <person name="Arakawa T."/>
            <person name="Banh J."/>
            <person name="Banno F."/>
            <person name="Bowser L."/>
            <person name="Brooks S.Y."/>
            <person name="Carninci P."/>
            <person name="Chao Q."/>
            <person name="Choy N."/>
            <person name="Enju A."/>
            <person name="Goldsmith A.D."/>
            <person name="Gurjal M."/>
            <person name="Hansen N.F."/>
            <person name="Hayashizaki Y."/>
            <person name="Johnson-Hopson C."/>
            <person name="Hsuan V.W."/>
            <person name="Iida K."/>
            <person name="Karnes M."/>
            <person name="Khan S."/>
            <person name="Koesema E."/>
            <person name="Ishida J."/>
            <person name="Jiang P.X."/>
            <person name="Jones T."/>
            <person name="Kawai J."/>
            <person name="Kamiya A."/>
            <person name="Meyers C."/>
            <person name="Nakajima M."/>
            <person name="Narusaka M."/>
            <person name="Seki M."/>
            <person name="Sakurai T."/>
            <person name="Satou M."/>
            <person name="Tamse R."/>
            <person name="Vaysberg M."/>
            <person name="Wallender E.K."/>
            <person name="Wong C."/>
            <person name="Yamamura Y."/>
            <person name="Yuan S."/>
            <person name="Shinozaki K."/>
            <person name="Davis R.W."/>
            <person name="Theologis A."/>
            <person name="Ecker J.R."/>
        </authorList>
    </citation>
    <scope>NUCLEOTIDE SEQUENCE [LARGE SCALE MRNA]</scope>
    <source>
        <strain>cv. Columbia</strain>
    </source>
</reference>
<reference key="6">
    <citation type="journal article" date="2001" name="Plant Physiol.">
        <title>Phylogenetic relationships within cation transporter families of Arabidopsis.</title>
        <authorList>
            <person name="Maeser P."/>
            <person name="Thomine S."/>
            <person name="Schroeder J.I."/>
            <person name="Ward J.M."/>
            <person name="Hirschi K."/>
            <person name="Sze H."/>
            <person name="Talke I.N."/>
            <person name="Amtmann A."/>
            <person name="Maathuis F.J.M."/>
            <person name="Sanders D."/>
            <person name="Harper J.F."/>
            <person name="Tchieu J."/>
            <person name="Gribskov M."/>
            <person name="Persans M.W."/>
            <person name="Salt D.E."/>
            <person name="Kim S.A."/>
            <person name="Guerinot M.L."/>
        </authorList>
    </citation>
    <scope>GENE FAMILY</scope>
    <scope>NOMENCLATURE</scope>
</reference>
<accession>Q9SKD7</accession>
<accession>Q9XFS1</accession>
<accession>Q9ZPK1</accession>
<sequence>MMNPQRNKFVRFNGNDDEFSTKTTRPSVSSVMKTVRRSFEKGSEKIRTFKRPLSVHSNKNKENNKKKKILRVMNPNDSYLQSWNKIFLLLSVVALAFDPLFFYIPYVKPERFCLNLDKKLQTIACVFRTFIDAFYVVHMLFQFHTGFITPSSSGFGRGELNEKHKDIALRYLGSYFLIDLLSILPIPQVVVLAIVPRMRRPASLVAKELLKWVIFCQYVPRIARIYPLFKEVTRTSGLVTETAWAGAALNLFLYMLASHVFGSFWYLISIERKDRCWREACAKIQNCTHAYLYCSPTGEDNRLFLNGSCPLIDPEEITNSTVFNFGIFADALQSGVVESRDFPKKFFYCFWWGLRNLSALGQNLKTSAFEGEIIFAIVICISGLVLFALLIGNMQKYLQSTTVRVEEMRVKRRDAEQWMSHRMLPDDLRKRIRKYEQYKWQETKGVEEEALLSSLPKDLRKDIKRHLCLKLLKKVPWFQAMDDRLLDALCARLKTVLYTEKSYIVREGEPVEDMLFIMRGNLISTTTYGGRTGFFNSVDLVAGDFCGDLLTWALDPLSSQFPISSRTVQALTEVEGFLLSADDLKFVATQYRRLHSKQLRHMFRFYSVQWQTWAACFIQAAWKRHCRRKLSKALREEEGKLHNTLQNDDSGGNKLNLGAAIYASRFASHALRNLRANAAARNSRFPHMLTLLPQKPADPEFPMDET</sequence>
<feature type="chain" id="PRO_0000219331" description="Probable cyclic nucleotide-gated ion channel 3">
    <location>
        <begin position="1"/>
        <end position="706"/>
    </location>
</feature>
<feature type="topological domain" description="Cytoplasmic" evidence="2">
    <location>
        <begin position="1"/>
        <end position="85"/>
    </location>
</feature>
<feature type="transmembrane region" description="Helical; Name=H1" evidence="2">
    <location>
        <begin position="86"/>
        <end position="106"/>
    </location>
</feature>
<feature type="topological domain" description="Extracellular" evidence="2">
    <location>
        <begin position="107"/>
        <end position="119"/>
    </location>
</feature>
<feature type="transmembrane region" description="Helical; Name=H2" evidence="2">
    <location>
        <begin position="120"/>
        <end position="140"/>
    </location>
</feature>
<feature type="topological domain" description="Cytoplasmic" evidence="2">
    <location>
        <begin position="141"/>
        <end position="174"/>
    </location>
</feature>
<feature type="transmembrane region" description="Helical; Name=H3" evidence="2">
    <location>
        <begin position="175"/>
        <end position="195"/>
    </location>
</feature>
<feature type="topological domain" description="Extracellular" evidence="2">
    <location>
        <begin position="196"/>
        <end position="208"/>
    </location>
</feature>
<feature type="transmembrane region" description="Helical; Name=H4" evidence="2">
    <location>
        <begin position="209"/>
        <end position="229"/>
    </location>
</feature>
<feature type="topological domain" description="Cytoplasmic" evidence="2">
    <location>
        <begin position="230"/>
        <end position="247"/>
    </location>
</feature>
<feature type="transmembrane region" description="Helical; Name=H5" evidence="2">
    <location>
        <begin position="248"/>
        <end position="268"/>
    </location>
</feature>
<feature type="topological domain" description="Extracellular" evidence="2">
    <location>
        <begin position="269"/>
        <end position="371"/>
    </location>
</feature>
<feature type="transmembrane region" description="Helical; Name=H6" evidence="2">
    <location>
        <begin position="372"/>
        <end position="392"/>
    </location>
</feature>
<feature type="topological domain" description="Cytoplasmic" evidence="2">
    <location>
        <begin position="393"/>
        <end position="706"/>
    </location>
</feature>
<feature type="domain" description="IQ">
    <location>
        <begin position="611"/>
        <end position="640"/>
    </location>
</feature>
<feature type="region of interest" description="Calmodulin-binding" evidence="1">
    <location>
        <begin position="591"/>
        <end position="606"/>
    </location>
</feature>
<feature type="binding site">
    <location>
        <begin position="477"/>
        <end position="600"/>
    </location>
    <ligand>
        <name>a nucleoside 3',5'-cyclic phosphate</name>
        <dbReference type="ChEBI" id="CHEBI:58464"/>
    </ligand>
</feature>
<feature type="binding site" evidence="1">
    <location>
        <position position="548"/>
    </location>
    <ligand>
        <name>a nucleoside 3',5'-cyclic phosphate</name>
        <dbReference type="ChEBI" id="CHEBI:58464"/>
    </ligand>
</feature>
<feature type="sequence conflict" description="In Ref. 2; AAD19610." evidence="3" ref="2">
    <original>T</original>
    <variation>N</variation>
    <location>
        <position position="24"/>
    </location>
</feature>
<feature type="sequence conflict" description="In Ref. 2; AAD19610." evidence="3" ref="2">
    <original>K</original>
    <variation>N</variation>
    <location>
        <position position="283"/>
    </location>
</feature>
<feature type="sequence conflict" description="In Ref. 2; AAD19610." evidence="3" ref="2">
    <original>NCTHAY</original>
    <variation>DCSHEK</variation>
    <location>
        <begin position="286"/>
        <end position="291"/>
    </location>
</feature>
<feature type="sequence conflict" description="In Ref. 2; AAD19610." evidence="3" ref="2">
    <original>A</original>
    <variation>S</variation>
    <location>
        <position position="368"/>
    </location>
</feature>
<feature type="sequence conflict" description="In Ref. 2; AAD19610." evidence="3" ref="2">
    <original>P</original>
    <variation>A</variation>
    <location>
        <position position="510"/>
    </location>
</feature>
<feature type="sequence conflict" description="In Ref. 2; AAD19610." evidence="3" ref="2">
    <original>R</original>
    <variation>K</variation>
    <location>
        <position position="531"/>
    </location>
</feature>
<feature type="sequence conflict" description="In Ref. 2; AAD19610." evidence="3" ref="2">
    <original>L</original>
    <variation>V</variation>
    <location>
        <position position="578"/>
    </location>
</feature>
<feature type="sequence conflict" description="In Ref. 2; AAD19610." evidence="3" ref="2">
    <original>E</original>
    <variation>Q</variation>
    <location>
        <position position="636"/>
    </location>
</feature>
<feature type="sequence conflict" description="In Ref. 2; AAD19610." evidence="3" ref="2">
    <original>G</original>
    <variation>GG</variation>
    <location>
        <position position="639"/>
    </location>
</feature>
<feature type="sequence conflict" description="In Ref. 2; AAD19610." evidence="3" ref="2">
    <original>Y</original>
    <variation>N</variation>
    <location>
        <position position="662"/>
    </location>
</feature>
<protein>
    <recommendedName>
        <fullName>Probable cyclic nucleotide-gated ion channel 3</fullName>
        <shortName>AtCNGC3</shortName>
    </recommendedName>
    <alternativeName>
        <fullName>Cyclic nucleotide- and calmodulin-regulated ion channel 3</fullName>
    </alternativeName>
</protein>
<organism>
    <name type="scientific">Arabidopsis thaliana</name>
    <name type="common">Mouse-ear cress</name>
    <dbReference type="NCBI Taxonomy" id="3702"/>
    <lineage>
        <taxon>Eukaryota</taxon>
        <taxon>Viridiplantae</taxon>
        <taxon>Streptophyta</taxon>
        <taxon>Embryophyta</taxon>
        <taxon>Tracheophyta</taxon>
        <taxon>Spermatophyta</taxon>
        <taxon>Magnoliopsida</taxon>
        <taxon>eudicotyledons</taxon>
        <taxon>Gunneridae</taxon>
        <taxon>Pentapetalae</taxon>
        <taxon>rosids</taxon>
        <taxon>malvids</taxon>
        <taxon>Brassicales</taxon>
        <taxon>Brassicaceae</taxon>
        <taxon>Camelineae</taxon>
        <taxon>Arabidopsis</taxon>
    </lineage>
</organism>
<dbReference type="EMBL" id="Y17911">
    <property type="protein sequence ID" value="CAB40128.1"/>
    <property type="molecule type" value="Genomic_DNA"/>
</dbReference>
<dbReference type="EMBL" id="AF107726">
    <property type="protein sequence ID" value="AAD19610.1"/>
    <property type="molecule type" value="mRNA"/>
</dbReference>
<dbReference type="EMBL" id="AC006526">
    <property type="protein sequence ID" value="AAD23045.2"/>
    <property type="molecule type" value="Genomic_DNA"/>
</dbReference>
<dbReference type="EMBL" id="CP002685">
    <property type="protein sequence ID" value="AEC10694.1"/>
    <property type="molecule type" value="Genomic_DNA"/>
</dbReference>
<dbReference type="EMBL" id="CP002685">
    <property type="protein sequence ID" value="AEC10695.1"/>
    <property type="molecule type" value="Genomic_DNA"/>
</dbReference>
<dbReference type="EMBL" id="AY058167">
    <property type="protein sequence ID" value="AAL25581.1"/>
    <property type="molecule type" value="mRNA"/>
</dbReference>
<dbReference type="PIR" id="G84902">
    <property type="entry name" value="G84902"/>
</dbReference>
<dbReference type="RefSeq" id="NP_001118537.1">
    <property type="nucleotide sequence ID" value="NM_001125065.2"/>
</dbReference>
<dbReference type="RefSeq" id="NP_566075.1">
    <property type="nucleotide sequence ID" value="NM_130207.4"/>
</dbReference>
<dbReference type="FunCoup" id="Q9SKD7">
    <property type="interactions" value="207"/>
</dbReference>
<dbReference type="STRING" id="3702.Q9SKD7"/>
<dbReference type="TCDB" id="1.A.1.5.8">
    <property type="family name" value="the voltage-gated ion channel (vic) superfamily"/>
</dbReference>
<dbReference type="PaxDb" id="3702-AT2G46430.1"/>
<dbReference type="ProteomicsDB" id="220296"/>
<dbReference type="EnsemblPlants" id="AT2G46430.1">
    <property type="protein sequence ID" value="AT2G46430.1"/>
    <property type="gene ID" value="AT2G46430"/>
</dbReference>
<dbReference type="EnsemblPlants" id="AT2G46430.2">
    <property type="protein sequence ID" value="AT2G46430.2"/>
    <property type="gene ID" value="AT2G46430"/>
</dbReference>
<dbReference type="GeneID" id="819251"/>
<dbReference type="Gramene" id="AT2G46430.1">
    <property type="protein sequence ID" value="AT2G46430.1"/>
    <property type="gene ID" value="AT2G46430"/>
</dbReference>
<dbReference type="Gramene" id="AT2G46430.2">
    <property type="protein sequence ID" value="AT2G46430.2"/>
    <property type="gene ID" value="AT2G46430"/>
</dbReference>
<dbReference type="KEGG" id="ath:AT2G46430"/>
<dbReference type="Araport" id="AT2G46430"/>
<dbReference type="TAIR" id="AT2G46430">
    <property type="gene designation" value="CNGC3"/>
</dbReference>
<dbReference type="eggNOG" id="KOG0498">
    <property type="taxonomic scope" value="Eukaryota"/>
</dbReference>
<dbReference type="HOGENOM" id="CLU_013069_3_0_1"/>
<dbReference type="InParanoid" id="Q9SKD7"/>
<dbReference type="OMA" id="LLKWVIF"/>
<dbReference type="OrthoDB" id="421226at2759"/>
<dbReference type="PhylomeDB" id="Q9SKD7"/>
<dbReference type="PRO" id="PR:Q9SKD7"/>
<dbReference type="Proteomes" id="UP000006548">
    <property type="component" value="Chromosome 2"/>
</dbReference>
<dbReference type="ExpressionAtlas" id="Q9SKD7">
    <property type="expression patterns" value="baseline and differential"/>
</dbReference>
<dbReference type="GO" id="GO:0005886">
    <property type="term" value="C:plasma membrane"/>
    <property type="evidence" value="ECO:0007669"/>
    <property type="project" value="UniProtKB-SubCell"/>
</dbReference>
<dbReference type="GO" id="GO:0005516">
    <property type="term" value="F:calmodulin binding"/>
    <property type="evidence" value="ECO:0007669"/>
    <property type="project" value="UniProtKB-KW"/>
</dbReference>
<dbReference type="GO" id="GO:0030552">
    <property type="term" value="F:cAMP binding"/>
    <property type="evidence" value="ECO:0007669"/>
    <property type="project" value="UniProtKB-KW"/>
</dbReference>
<dbReference type="GO" id="GO:0030553">
    <property type="term" value="F:cGMP binding"/>
    <property type="evidence" value="ECO:0007669"/>
    <property type="project" value="UniProtKB-KW"/>
</dbReference>
<dbReference type="GO" id="GO:0005216">
    <property type="term" value="F:monoatomic ion channel activity"/>
    <property type="evidence" value="ECO:0007669"/>
    <property type="project" value="InterPro"/>
</dbReference>
<dbReference type="CDD" id="cd00038">
    <property type="entry name" value="CAP_ED"/>
    <property type="match status" value="1"/>
</dbReference>
<dbReference type="FunFam" id="1.10.287.630:FF:000003">
    <property type="entry name" value="Cyclic nucleotide-gated ion channel 1"/>
    <property type="match status" value="1"/>
</dbReference>
<dbReference type="FunFam" id="2.60.120.10:FF:000024">
    <property type="entry name" value="Cyclic nucleotide-gated ion channel 1"/>
    <property type="match status" value="1"/>
</dbReference>
<dbReference type="Gene3D" id="1.10.287.70">
    <property type="match status" value="1"/>
</dbReference>
<dbReference type="Gene3D" id="1.10.287.630">
    <property type="entry name" value="Helix hairpin bin"/>
    <property type="match status" value="1"/>
</dbReference>
<dbReference type="Gene3D" id="2.60.120.10">
    <property type="entry name" value="Jelly Rolls"/>
    <property type="match status" value="1"/>
</dbReference>
<dbReference type="InterPro" id="IPR000595">
    <property type="entry name" value="cNMP-bd_dom"/>
</dbReference>
<dbReference type="InterPro" id="IPR018490">
    <property type="entry name" value="cNMP-bd_dom_sf"/>
</dbReference>
<dbReference type="InterPro" id="IPR005821">
    <property type="entry name" value="Ion_trans_dom"/>
</dbReference>
<dbReference type="InterPro" id="IPR014710">
    <property type="entry name" value="RmlC-like_jellyroll"/>
</dbReference>
<dbReference type="PANTHER" id="PTHR45651">
    <property type="entry name" value="CYCLIC NUCLEOTIDE-GATED ION CHANNEL 15-RELATED-RELATED"/>
    <property type="match status" value="1"/>
</dbReference>
<dbReference type="PANTHER" id="PTHR45651:SF35">
    <property type="entry name" value="CYCLIC NUCLEOTIDE-GATED ION CHANNEL 3-RELATED"/>
    <property type="match status" value="1"/>
</dbReference>
<dbReference type="Pfam" id="PF00520">
    <property type="entry name" value="Ion_trans"/>
    <property type="match status" value="1"/>
</dbReference>
<dbReference type="SMART" id="SM00100">
    <property type="entry name" value="cNMP"/>
    <property type="match status" value="1"/>
</dbReference>
<dbReference type="SUPFAM" id="SSF51206">
    <property type="entry name" value="cAMP-binding domain-like"/>
    <property type="match status" value="1"/>
</dbReference>
<dbReference type="SUPFAM" id="SSF81324">
    <property type="entry name" value="Voltage-gated potassium channels"/>
    <property type="match status" value="1"/>
</dbReference>
<dbReference type="PROSITE" id="PS50042">
    <property type="entry name" value="CNMP_BINDING_3"/>
    <property type="match status" value="1"/>
</dbReference>
<evidence type="ECO:0000250" key="1"/>
<evidence type="ECO:0000255" key="2"/>
<evidence type="ECO:0000305" key="3"/>